<accession>Q6K609</accession>
<accession>A0A0P0VJM8</accession>
<accession>A3A7B0</accession>
<sequence>MQYGAAAEQAWYMPAAAPAPMVESAVARVERLASESAVVVFSVSSCCMCHAVKRLFCGMGVHPTVHELDLDPRGRELERALARLVGYGGPAAASPPVVPVVFIGGKLVGAMDRVMAAHINGSLVPLLKEAGALWL</sequence>
<protein>
    <recommendedName>
        <fullName>Glutaredoxin-C3</fullName>
    </recommendedName>
    <alternativeName>
        <fullName>Protein ROXY 2</fullName>
    </alternativeName>
</protein>
<name>GRXC3_ORYSJ</name>
<comment type="function">
    <text evidence="1">Has a glutathione-disulfide oxidoreductase activity in the presence of NADPH and glutathione reductase. Reduces low molecular weight disulfides and proteins (By similarity).</text>
</comment>
<comment type="subcellular location">
    <subcellularLocation>
        <location evidence="1">Cytoplasm</location>
    </subcellularLocation>
    <subcellularLocation>
        <location evidence="1">Nucleus</location>
    </subcellularLocation>
</comment>
<comment type="similarity">
    <text evidence="3">Belongs to the glutaredoxin family. CC-type subfamily.</text>
</comment>
<evidence type="ECO:0000250" key="1"/>
<evidence type="ECO:0000255" key="2">
    <source>
        <dbReference type="PROSITE-ProRule" id="PRU00686"/>
    </source>
</evidence>
<evidence type="ECO:0000305" key="3"/>
<dbReference type="EMBL" id="FJ463034">
    <property type="protein sequence ID" value="ACL68663.1"/>
    <property type="molecule type" value="mRNA"/>
</dbReference>
<dbReference type="EMBL" id="AP005299">
    <property type="protein sequence ID" value="BAD23238.1"/>
    <property type="molecule type" value="Genomic_DNA"/>
</dbReference>
<dbReference type="EMBL" id="AP008208">
    <property type="protein sequence ID" value="BAF08856.1"/>
    <property type="molecule type" value="Genomic_DNA"/>
</dbReference>
<dbReference type="EMBL" id="AP014958">
    <property type="protein sequence ID" value="BAS78870.1"/>
    <property type="molecule type" value="Genomic_DNA"/>
</dbReference>
<dbReference type="EMBL" id="CM000139">
    <property type="protein sequence ID" value="EAZ23199.1"/>
    <property type="molecule type" value="Genomic_DNA"/>
</dbReference>
<dbReference type="EMBL" id="AK073461">
    <property type="protein sequence ID" value="BAG93464.1"/>
    <property type="molecule type" value="mRNA"/>
</dbReference>
<dbReference type="RefSeq" id="XP_015624789.1">
    <property type="nucleotide sequence ID" value="XM_015769303.1"/>
</dbReference>
<dbReference type="SMR" id="Q6K609"/>
<dbReference type="FunCoup" id="Q6K609">
    <property type="interactions" value="29"/>
</dbReference>
<dbReference type="STRING" id="39947.Q6K609"/>
<dbReference type="PaxDb" id="39947-Q6K609"/>
<dbReference type="EnsemblPlants" id="Os02t0512400-01">
    <property type="protein sequence ID" value="Os02t0512400-01"/>
    <property type="gene ID" value="Os02g0512400"/>
</dbReference>
<dbReference type="Gramene" id="Os02t0512400-01">
    <property type="protein sequence ID" value="Os02t0512400-01"/>
    <property type="gene ID" value="Os02g0512400"/>
</dbReference>
<dbReference type="KEGG" id="dosa:Os02g0512400"/>
<dbReference type="eggNOG" id="KOG1752">
    <property type="taxonomic scope" value="Eukaryota"/>
</dbReference>
<dbReference type="HOGENOM" id="CLU_026126_6_1_1"/>
<dbReference type="InParanoid" id="Q6K609"/>
<dbReference type="OMA" id="TESWGTY"/>
<dbReference type="OrthoDB" id="418495at2759"/>
<dbReference type="Proteomes" id="UP000000763">
    <property type="component" value="Chromosome 2"/>
</dbReference>
<dbReference type="Proteomes" id="UP000007752">
    <property type="component" value="Chromosome 2"/>
</dbReference>
<dbReference type="Proteomes" id="UP000059680">
    <property type="component" value="Chromosome 2"/>
</dbReference>
<dbReference type="GO" id="GO:0005737">
    <property type="term" value="C:cytoplasm"/>
    <property type="evidence" value="ECO:0007669"/>
    <property type="project" value="UniProtKB-SubCell"/>
</dbReference>
<dbReference type="GO" id="GO:0005634">
    <property type="term" value="C:nucleus"/>
    <property type="evidence" value="ECO:0007669"/>
    <property type="project" value="UniProtKB-SubCell"/>
</dbReference>
<dbReference type="CDD" id="cd03419">
    <property type="entry name" value="GRX_GRXh_1_2_like"/>
    <property type="match status" value="1"/>
</dbReference>
<dbReference type="FunFam" id="3.40.30.10:FF:000028">
    <property type="entry name" value="Glutaredoxin family protein"/>
    <property type="match status" value="1"/>
</dbReference>
<dbReference type="Gene3D" id="3.40.30.10">
    <property type="entry name" value="Glutaredoxin"/>
    <property type="match status" value="1"/>
</dbReference>
<dbReference type="InterPro" id="IPR011905">
    <property type="entry name" value="GlrX-like_pln_2"/>
</dbReference>
<dbReference type="InterPro" id="IPR002109">
    <property type="entry name" value="Glutaredoxin"/>
</dbReference>
<dbReference type="InterPro" id="IPR036249">
    <property type="entry name" value="Thioredoxin-like_sf"/>
</dbReference>
<dbReference type="NCBIfam" id="TIGR02189">
    <property type="entry name" value="GlrX-like_plant"/>
    <property type="match status" value="1"/>
</dbReference>
<dbReference type="PANTHER" id="PTHR10168">
    <property type="entry name" value="GLUTAREDOXIN"/>
    <property type="match status" value="1"/>
</dbReference>
<dbReference type="Pfam" id="PF00462">
    <property type="entry name" value="Glutaredoxin"/>
    <property type="match status" value="1"/>
</dbReference>
<dbReference type="SUPFAM" id="SSF52833">
    <property type="entry name" value="Thioredoxin-like"/>
    <property type="match status" value="1"/>
</dbReference>
<dbReference type="PROSITE" id="PS51354">
    <property type="entry name" value="GLUTAREDOXIN_2"/>
    <property type="match status" value="1"/>
</dbReference>
<feature type="chain" id="PRO_0000269665" description="Glutaredoxin-C3">
    <location>
        <begin position="1"/>
        <end position="135"/>
    </location>
</feature>
<feature type="domain" description="Glutaredoxin" evidence="2">
    <location>
        <begin position="26"/>
        <end position="134"/>
    </location>
</feature>
<feature type="short sequence motif" description="Responsive for interaction with TGA factors" evidence="1">
    <location>
        <begin position="132"/>
        <end position="135"/>
    </location>
</feature>
<feature type="disulfide bond" description="Redox-active" evidence="1">
    <location>
        <begin position="46"/>
        <end position="49"/>
    </location>
</feature>
<gene>
    <name type="primary">GRXC3</name>
    <name type="synonym">ROXY2</name>
    <name type="ordered locus">Os02g0512400</name>
    <name type="ordered locus">LOC_Os02g30850</name>
    <name type="ORF">OJ1789_D08.10</name>
</gene>
<keyword id="KW-0963">Cytoplasm</keyword>
<keyword id="KW-1015">Disulfide bond</keyword>
<keyword id="KW-0249">Electron transport</keyword>
<keyword id="KW-0539">Nucleus</keyword>
<keyword id="KW-0676">Redox-active center</keyword>
<keyword id="KW-1185">Reference proteome</keyword>
<keyword id="KW-0813">Transport</keyword>
<organism>
    <name type="scientific">Oryza sativa subsp. japonica</name>
    <name type="common">Rice</name>
    <dbReference type="NCBI Taxonomy" id="39947"/>
    <lineage>
        <taxon>Eukaryota</taxon>
        <taxon>Viridiplantae</taxon>
        <taxon>Streptophyta</taxon>
        <taxon>Embryophyta</taxon>
        <taxon>Tracheophyta</taxon>
        <taxon>Spermatophyta</taxon>
        <taxon>Magnoliopsida</taxon>
        <taxon>Liliopsida</taxon>
        <taxon>Poales</taxon>
        <taxon>Poaceae</taxon>
        <taxon>BOP clade</taxon>
        <taxon>Oryzoideae</taxon>
        <taxon>Oryzeae</taxon>
        <taxon>Oryzinae</taxon>
        <taxon>Oryza</taxon>
        <taxon>Oryza sativa</taxon>
    </lineage>
</organism>
<proteinExistence type="evidence at transcript level"/>
<reference key="1">
    <citation type="journal article" date="2009" name="Mol. Plant">
        <title>Conserved functions of Arabidopsis and rice CC-type glutaredoxins in flower development and pathogen response.</title>
        <authorList>
            <person name="Wang Z."/>
            <person name="Xing S."/>
            <person name="Birkenbihl R.P."/>
            <person name="Zachgo S."/>
        </authorList>
    </citation>
    <scope>NUCLEOTIDE SEQUENCE [MRNA]</scope>
</reference>
<reference key="2">
    <citation type="journal article" date="2005" name="Nature">
        <title>The map-based sequence of the rice genome.</title>
        <authorList>
            <consortium name="International rice genome sequencing project (IRGSP)"/>
        </authorList>
    </citation>
    <scope>NUCLEOTIDE SEQUENCE [LARGE SCALE GENOMIC DNA]</scope>
    <source>
        <strain>cv. Nipponbare</strain>
    </source>
</reference>
<reference key="3">
    <citation type="journal article" date="2008" name="Nucleic Acids Res.">
        <title>The rice annotation project database (RAP-DB): 2008 update.</title>
        <authorList>
            <consortium name="The rice annotation project (RAP)"/>
        </authorList>
    </citation>
    <scope>GENOME REANNOTATION</scope>
    <source>
        <strain>cv. Nipponbare</strain>
    </source>
</reference>
<reference key="4">
    <citation type="journal article" date="2013" name="Rice">
        <title>Improvement of the Oryza sativa Nipponbare reference genome using next generation sequence and optical map data.</title>
        <authorList>
            <person name="Kawahara Y."/>
            <person name="de la Bastide M."/>
            <person name="Hamilton J.P."/>
            <person name="Kanamori H."/>
            <person name="McCombie W.R."/>
            <person name="Ouyang S."/>
            <person name="Schwartz D.C."/>
            <person name="Tanaka T."/>
            <person name="Wu J."/>
            <person name="Zhou S."/>
            <person name="Childs K.L."/>
            <person name="Davidson R.M."/>
            <person name="Lin H."/>
            <person name="Quesada-Ocampo L."/>
            <person name="Vaillancourt B."/>
            <person name="Sakai H."/>
            <person name="Lee S.S."/>
            <person name="Kim J."/>
            <person name="Numa H."/>
            <person name="Itoh T."/>
            <person name="Buell C.R."/>
            <person name="Matsumoto T."/>
        </authorList>
    </citation>
    <scope>GENOME REANNOTATION</scope>
    <source>
        <strain>cv. Nipponbare</strain>
    </source>
</reference>
<reference key="5">
    <citation type="journal article" date="2005" name="PLoS Biol.">
        <title>The genomes of Oryza sativa: a history of duplications.</title>
        <authorList>
            <person name="Yu J."/>
            <person name="Wang J."/>
            <person name="Lin W."/>
            <person name="Li S."/>
            <person name="Li H."/>
            <person name="Zhou J."/>
            <person name="Ni P."/>
            <person name="Dong W."/>
            <person name="Hu S."/>
            <person name="Zeng C."/>
            <person name="Zhang J."/>
            <person name="Zhang Y."/>
            <person name="Li R."/>
            <person name="Xu Z."/>
            <person name="Li S."/>
            <person name="Li X."/>
            <person name="Zheng H."/>
            <person name="Cong L."/>
            <person name="Lin L."/>
            <person name="Yin J."/>
            <person name="Geng J."/>
            <person name="Li G."/>
            <person name="Shi J."/>
            <person name="Liu J."/>
            <person name="Lv H."/>
            <person name="Li J."/>
            <person name="Wang J."/>
            <person name="Deng Y."/>
            <person name="Ran L."/>
            <person name="Shi X."/>
            <person name="Wang X."/>
            <person name="Wu Q."/>
            <person name="Li C."/>
            <person name="Ren X."/>
            <person name="Wang J."/>
            <person name="Wang X."/>
            <person name="Li D."/>
            <person name="Liu D."/>
            <person name="Zhang X."/>
            <person name="Ji Z."/>
            <person name="Zhao W."/>
            <person name="Sun Y."/>
            <person name="Zhang Z."/>
            <person name="Bao J."/>
            <person name="Han Y."/>
            <person name="Dong L."/>
            <person name="Ji J."/>
            <person name="Chen P."/>
            <person name="Wu S."/>
            <person name="Liu J."/>
            <person name="Xiao Y."/>
            <person name="Bu D."/>
            <person name="Tan J."/>
            <person name="Yang L."/>
            <person name="Ye C."/>
            <person name="Zhang J."/>
            <person name="Xu J."/>
            <person name="Zhou Y."/>
            <person name="Yu Y."/>
            <person name="Zhang B."/>
            <person name="Zhuang S."/>
            <person name="Wei H."/>
            <person name="Liu B."/>
            <person name="Lei M."/>
            <person name="Yu H."/>
            <person name="Li Y."/>
            <person name="Xu H."/>
            <person name="Wei S."/>
            <person name="He X."/>
            <person name="Fang L."/>
            <person name="Zhang Z."/>
            <person name="Zhang Y."/>
            <person name="Huang X."/>
            <person name="Su Z."/>
            <person name="Tong W."/>
            <person name="Li J."/>
            <person name="Tong Z."/>
            <person name="Li S."/>
            <person name="Ye J."/>
            <person name="Wang L."/>
            <person name="Fang L."/>
            <person name="Lei T."/>
            <person name="Chen C.-S."/>
            <person name="Chen H.-C."/>
            <person name="Xu Z."/>
            <person name="Li H."/>
            <person name="Huang H."/>
            <person name="Zhang F."/>
            <person name="Xu H."/>
            <person name="Li N."/>
            <person name="Zhao C."/>
            <person name="Li S."/>
            <person name="Dong L."/>
            <person name="Huang Y."/>
            <person name="Li L."/>
            <person name="Xi Y."/>
            <person name="Qi Q."/>
            <person name="Li W."/>
            <person name="Zhang B."/>
            <person name="Hu W."/>
            <person name="Zhang Y."/>
            <person name="Tian X."/>
            <person name="Jiao Y."/>
            <person name="Liang X."/>
            <person name="Jin J."/>
            <person name="Gao L."/>
            <person name="Zheng W."/>
            <person name="Hao B."/>
            <person name="Liu S.-M."/>
            <person name="Wang W."/>
            <person name="Yuan L."/>
            <person name="Cao M."/>
            <person name="McDermott J."/>
            <person name="Samudrala R."/>
            <person name="Wang J."/>
            <person name="Wong G.K.-S."/>
            <person name="Yang H."/>
        </authorList>
    </citation>
    <scope>NUCLEOTIDE SEQUENCE [LARGE SCALE GENOMIC DNA]</scope>
    <source>
        <strain>cv. Nipponbare</strain>
    </source>
</reference>
<reference key="6">
    <citation type="journal article" date="2003" name="Science">
        <title>Collection, mapping, and annotation of over 28,000 cDNA clones from japonica rice.</title>
        <authorList>
            <consortium name="The rice full-length cDNA consortium"/>
        </authorList>
    </citation>
    <scope>NUCLEOTIDE SEQUENCE [LARGE SCALE MRNA]</scope>
    <source>
        <strain>cv. Nipponbare</strain>
    </source>
</reference>
<reference key="7">
    <citation type="journal article" date="2006" name="J. Exp. Bot.">
        <title>Genome-wide analysis of plant glutaredoxin systems.</title>
        <authorList>
            <person name="Rouhier N."/>
            <person name="Couturier J."/>
            <person name="Jacquot J.-P."/>
        </authorList>
    </citation>
    <scope>GENE FAMILY</scope>
</reference>